<protein>
    <recommendedName>
        <fullName>CTD nuclear envelope phosphatase 1</fullName>
        <ecNumber>3.1.3.16</ecNumber>
    </recommendedName>
    <alternativeName>
        <fullName>Serine/threonine-protein phosphatase dullard</fullName>
    </alternativeName>
</protein>
<feature type="chain" id="PRO_0000297972" description="CTD nuclear envelope phosphatase 1">
    <location>
        <begin position="1"/>
        <end position="244"/>
    </location>
</feature>
<feature type="transmembrane region" description="Helical" evidence="2">
    <location>
        <begin position="7"/>
        <end position="29"/>
    </location>
</feature>
<feature type="domain" description="FCP1 homology" evidence="3">
    <location>
        <begin position="58"/>
        <end position="225"/>
    </location>
</feature>
<feature type="mutagenesis site" description="Strongly reduces phosphatase activity." evidence="5">
    <original>D</original>
    <variation>E</variation>
    <location>
        <position position="67"/>
    </location>
</feature>
<feature type="mutagenesis site" description="Strongly reduces phosphatase activity." evidence="5">
    <original>D</original>
    <variation>E</variation>
    <location>
        <position position="69"/>
    </location>
</feature>
<feature type="sequence conflict" description="In Ref. 2; AAH82639." evidence="6" ref="2">
    <original>N</original>
    <variation>S</variation>
    <location>
        <position position="54"/>
    </location>
</feature>
<feature type="sequence conflict" description="In Ref. 2; AAH82639." evidence="6" ref="2">
    <original>G</original>
    <variation>A</variation>
    <location>
        <position position="150"/>
    </location>
</feature>
<organism>
    <name type="scientific">Xenopus laevis</name>
    <name type="common">African clawed frog</name>
    <dbReference type="NCBI Taxonomy" id="8355"/>
    <lineage>
        <taxon>Eukaryota</taxon>
        <taxon>Metazoa</taxon>
        <taxon>Chordata</taxon>
        <taxon>Craniata</taxon>
        <taxon>Vertebrata</taxon>
        <taxon>Euteleostomi</taxon>
        <taxon>Amphibia</taxon>
        <taxon>Batrachia</taxon>
        <taxon>Anura</taxon>
        <taxon>Pipoidea</taxon>
        <taxon>Pipidae</taxon>
        <taxon>Xenopodinae</taxon>
        <taxon>Xenopus</taxon>
        <taxon>Xenopus</taxon>
    </lineage>
</organism>
<sequence>MMRTPGLLGLRGFVAFAAKLWSFVLYLLRRQFRTIIQYQTVRYDVLPLSPASRNRLSQVKRKVLVLDLDETLIHSHHDGVLRPTVRPGTPPDFILKVVIDKHPVRFFVHKRPHVDFFLEVVSQWYELVVFTASMEIYGSAVADKLDNNKGVLRRRFYRQHCTLELGSYIKDLSVVHSDLSSVVILDNSPGAYRSHPDNAIPIKSWFSDPSDTALLNLLPMLDALRFTADVRSVLSRNLHQHRLW</sequence>
<reference key="1">
    <citation type="journal article" date="2002" name="Biochem. Biophys. Res. Commun.">
        <title>Molecular cloning and characterization of dullard: a novel gene required for neural development.</title>
        <authorList>
            <person name="Satow R."/>
            <person name="Chan T.C."/>
            <person name="Asashima M."/>
        </authorList>
    </citation>
    <scope>NUCLEOTIDE SEQUENCE [MRNA]</scope>
    <scope>DEVELOPMENTAL STAGE</scope>
    <scope>FUNCTION</scope>
    <source>
        <tissue>Embryo</tissue>
    </source>
</reference>
<reference key="2">
    <citation type="submission" date="2004-09" db="EMBL/GenBank/DDBJ databases">
        <authorList>
            <consortium name="NIH - Xenopus Gene Collection (XGC) project"/>
        </authorList>
    </citation>
    <scope>NUCLEOTIDE SEQUENCE [LARGE SCALE MRNA]</scope>
    <source>
        <tissue>Embryo</tissue>
    </source>
</reference>
<reference key="3">
    <citation type="journal article" date="2006" name="Dev. Cell">
        <title>Dullard promotes degradation and dephosphorylation of BMP receptors and is required for neural induction.</title>
        <authorList>
            <person name="Satow R."/>
            <person name="Kurisaki A."/>
            <person name="Chan T.C."/>
            <person name="Hamazaki T.S."/>
            <person name="Asashima M."/>
        </authorList>
    </citation>
    <scope>FUNCTION</scope>
    <scope>MUTAGENESIS OF ASP-67 AND ASP-69</scope>
    <scope>INTERACTION WITH BMPR1A; BMPR1B AND BMPR2</scope>
    <scope>SUBCELLULAR LOCATION</scope>
</reference>
<evidence type="ECO:0000250" key="1"/>
<evidence type="ECO:0000255" key="2"/>
<evidence type="ECO:0000255" key="3">
    <source>
        <dbReference type="PROSITE-ProRule" id="PRU00336"/>
    </source>
</evidence>
<evidence type="ECO:0000269" key="4">
    <source>
    </source>
</evidence>
<evidence type="ECO:0000269" key="5">
    <source>
    </source>
</evidence>
<evidence type="ECO:0000305" key="6"/>
<dbReference type="EC" id="3.1.3.16"/>
<dbReference type="EMBL" id="AB084264">
    <property type="protein sequence ID" value="BAB92973.1"/>
    <property type="molecule type" value="mRNA"/>
</dbReference>
<dbReference type="EMBL" id="BC082639">
    <property type="protein sequence ID" value="AAH82639.1"/>
    <property type="molecule type" value="mRNA"/>
</dbReference>
<dbReference type="RefSeq" id="NP_001084192.1">
    <property type="nucleotide sequence ID" value="NM_001090723.1"/>
</dbReference>
<dbReference type="RefSeq" id="NP_001090256.1">
    <property type="nucleotide sequence ID" value="NM_001096787.1"/>
</dbReference>
<dbReference type="SMR" id="Q8JIL9"/>
<dbReference type="DNASU" id="779162"/>
<dbReference type="GeneID" id="399358"/>
<dbReference type="GeneID" id="779162"/>
<dbReference type="KEGG" id="xla:399358"/>
<dbReference type="KEGG" id="xla:779162"/>
<dbReference type="AGR" id="Xenbase:XB-GENE-6254032"/>
<dbReference type="CTD" id="399358"/>
<dbReference type="CTD" id="779162"/>
<dbReference type="Xenbase" id="XB-GENE-6254032">
    <property type="gene designation" value="ctdnep1.L"/>
</dbReference>
<dbReference type="OMA" id="TESMEIY"/>
<dbReference type="OrthoDB" id="277011at2759"/>
<dbReference type="Proteomes" id="UP000186698">
    <property type="component" value="Chromosome 3L"/>
</dbReference>
<dbReference type="Proteomes" id="UP000186698">
    <property type="component" value="Chromosome 3S"/>
</dbReference>
<dbReference type="Bgee" id="399358">
    <property type="expression patterns" value="Expressed in egg cell and 19 other cell types or tissues"/>
</dbReference>
<dbReference type="GO" id="GO:0005737">
    <property type="term" value="C:cytoplasm"/>
    <property type="evidence" value="ECO:0000250"/>
    <property type="project" value="UniProtKB"/>
</dbReference>
<dbReference type="GO" id="GO:0005789">
    <property type="term" value="C:endoplasmic reticulum membrane"/>
    <property type="evidence" value="ECO:0000250"/>
    <property type="project" value="UniProtKB"/>
</dbReference>
<dbReference type="GO" id="GO:0071595">
    <property type="term" value="C:Nem1-Spo7 phosphatase complex"/>
    <property type="evidence" value="ECO:0000250"/>
    <property type="project" value="UniProtKB"/>
</dbReference>
<dbReference type="GO" id="GO:0005635">
    <property type="term" value="C:nuclear envelope"/>
    <property type="evidence" value="ECO:0000250"/>
    <property type="project" value="UniProtKB"/>
</dbReference>
<dbReference type="GO" id="GO:0031965">
    <property type="term" value="C:nuclear membrane"/>
    <property type="evidence" value="ECO:0000250"/>
    <property type="project" value="UniProtKB"/>
</dbReference>
<dbReference type="GO" id="GO:0048471">
    <property type="term" value="C:perinuclear region of cytoplasm"/>
    <property type="evidence" value="ECO:0007669"/>
    <property type="project" value="UniProtKB-SubCell"/>
</dbReference>
<dbReference type="GO" id="GO:0004721">
    <property type="term" value="F:phosphoprotein phosphatase activity"/>
    <property type="evidence" value="ECO:0000250"/>
    <property type="project" value="UniProtKB"/>
</dbReference>
<dbReference type="GO" id="GO:0004722">
    <property type="term" value="F:protein serine/threonine phosphatase activity"/>
    <property type="evidence" value="ECO:0000250"/>
    <property type="project" value="UniProtKB"/>
</dbReference>
<dbReference type="GO" id="GO:0030154">
    <property type="term" value="P:cell differentiation"/>
    <property type="evidence" value="ECO:0007669"/>
    <property type="project" value="UniProtKB-KW"/>
</dbReference>
<dbReference type="GO" id="GO:0030901">
    <property type="term" value="P:midbrain development"/>
    <property type="evidence" value="ECO:0000314"/>
    <property type="project" value="Xenbase"/>
</dbReference>
<dbReference type="GO" id="GO:0061351">
    <property type="term" value="P:neural precursor cell proliferation"/>
    <property type="evidence" value="ECO:0000315"/>
    <property type="project" value="Xenbase"/>
</dbReference>
<dbReference type="GO" id="GO:0006998">
    <property type="term" value="P:nuclear envelope organization"/>
    <property type="evidence" value="ECO:0000250"/>
    <property type="project" value="UniProtKB"/>
</dbReference>
<dbReference type="GO" id="GO:0010867">
    <property type="term" value="P:positive regulation of triglyceride biosynthetic process"/>
    <property type="evidence" value="ECO:0000250"/>
    <property type="project" value="UniProtKB"/>
</dbReference>
<dbReference type="CDD" id="cd07521">
    <property type="entry name" value="HAD_FCP1-like"/>
    <property type="match status" value="1"/>
</dbReference>
<dbReference type="FunFam" id="3.40.50.1000:FF:000044">
    <property type="entry name" value="CTD nuclear envelope phosphatase 1"/>
    <property type="match status" value="1"/>
</dbReference>
<dbReference type="Gene3D" id="3.40.50.1000">
    <property type="entry name" value="HAD superfamily/HAD-like"/>
    <property type="match status" value="1"/>
</dbReference>
<dbReference type="InterPro" id="IPR011948">
    <property type="entry name" value="Dullard_phosphatase"/>
</dbReference>
<dbReference type="InterPro" id="IPR004274">
    <property type="entry name" value="FCP1_dom"/>
</dbReference>
<dbReference type="InterPro" id="IPR036412">
    <property type="entry name" value="HAD-like_sf"/>
</dbReference>
<dbReference type="InterPro" id="IPR023214">
    <property type="entry name" value="HAD_sf"/>
</dbReference>
<dbReference type="InterPro" id="IPR050365">
    <property type="entry name" value="TIM50"/>
</dbReference>
<dbReference type="NCBIfam" id="TIGR02251">
    <property type="entry name" value="HIF-SF_euk"/>
    <property type="match status" value="1"/>
</dbReference>
<dbReference type="PANTHER" id="PTHR12210">
    <property type="entry name" value="DULLARD PROTEIN PHOSPHATASE"/>
    <property type="match status" value="1"/>
</dbReference>
<dbReference type="Pfam" id="PF03031">
    <property type="entry name" value="NIF"/>
    <property type="match status" value="1"/>
</dbReference>
<dbReference type="SMART" id="SM00577">
    <property type="entry name" value="CPDc"/>
    <property type="match status" value="1"/>
</dbReference>
<dbReference type="SUPFAM" id="SSF56784">
    <property type="entry name" value="HAD-like"/>
    <property type="match status" value="1"/>
</dbReference>
<dbReference type="PROSITE" id="PS50969">
    <property type="entry name" value="FCP1"/>
    <property type="match status" value="1"/>
</dbReference>
<accession>Q8JIL9</accession>
<accession>Q640I6</accession>
<keyword id="KW-0963">Cytoplasm</keyword>
<keyword id="KW-0217">Developmental protein</keyword>
<keyword id="KW-0221">Differentiation</keyword>
<keyword id="KW-0378">Hydrolase</keyword>
<keyword id="KW-0472">Membrane</keyword>
<keyword id="KW-0524">Neurogenesis</keyword>
<keyword id="KW-0904">Protein phosphatase</keyword>
<keyword id="KW-1185">Reference proteome</keyword>
<keyword id="KW-0812">Transmembrane</keyword>
<keyword id="KW-1133">Transmembrane helix</keyword>
<comment type="function">
    <text evidence="1 4 5">Serine/threonine protein phosphatase that may dephosphorylate and activate lipins. Lipins are phosphatidate phosphatases that catalyze the conversion of phosphatidic acid to diacylglycerol and control the metabolism of fatty acids at different levels. May indirectly modulate the lipid composition of nuclear and/or endoplasmic reticulum membranes and be required for proper nuclear membrane morphology and/or dynamics. May also indirectly regulate the production of lipid droplets and triacylglycerol (By similarity). Induces neuronal differentiation by antagonizing BMP signaling. Acts both by dephosphorylating BMPR1A and by promoting BMPR2 proteasomal degradation.</text>
</comment>
<comment type="catalytic activity">
    <reaction>
        <text>O-phospho-L-seryl-[protein] + H2O = L-seryl-[protein] + phosphate</text>
        <dbReference type="Rhea" id="RHEA:20629"/>
        <dbReference type="Rhea" id="RHEA-COMP:9863"/>
        <dbReference type="Rhea" id="RHEA-COMP:11604"/>
        <dbReference type="ChEBI" id="CHEBI:15377"/>
        <dbReference type="ChEBI" id="CHEBI:29999"/>
        <dbReference type="ChEBI" id="CHEBI:43474"/>
        <dbReference type="ChEBI" id="CHEBI:83421"/>
        <dbReference type="EC" id="3.1.3.16"/>
    </reaction>
</comment>
<comment type="catalytic activity">
    <reaction>
        <text>O-phospho-L-threonyl-[protein] + H2O = L-threonyl-[protein] + phosphate</text>
        <dbReference type="Rhea" id="RHEA:47004"/>
        <dbReference type="Rhea" id="RHEA-COMP:11060"/>
        <dbReference type="Rhea" id="RHEA-COMP:11605"/>
        <dbReference type="ChEBI" id="CHEBI:15377"/>
        <dbReference type="ChEBI" id="CHEBI:30013"/>
        <dbReference type="ChEBI" id="CHEBI:43474"/>
        <dbReference type="ChEBI" id="CHEBI:61977"/>
        <dbReference type="EC" id="3.1.3.16"/>
    </reaction>
</comment>
<comment type="subunit">
    <text evidence="5">Interacts with bmpr1a, bmpr1b and bmpr2.</text>
</comment>
<comment type="subcellular location">
    <subcellularLocation>
        <location evidence="6">Membrane</location>
        <topology evidence="6">Single-pass membrane protein</topology>
    </subcellularLocation>
    <subcellularLocation>
        <location evidence="5">Cytoplasm</location>
        <location evidence="5">Perinuclear region</location>
    </subcellularLocation>
</comment>
<comment type="developmental stage">
    <text evidence="4">Expressed from egg to stage 35. Expression is restricted to the neural region as gastrulation proceeds, and is subsequently localized to neural tissues, branchial arches and pronephroi at the tail-bud stages.</text>
</comment>
<comment type="similarity">
    <text evidence="6">Belongs to the dullard family.</text>
</comment>
<gene>
    <name type="primary">ctdnep1</name>
    <name type="synonym">dullard</name>
</gene>
<proteinExistence type="evidence at protein level"/>
<name>CNEP1_XENLA</name>